<feature type="propeptide" id="PRO_0000006345" description="Removed in mature form">
    <location>
        <begin position="1"/>
        <end position="57"/>
    </location>
</feature>
<feature type="chain" id="PRO_0000006346" description="Pesticidal crystal protein Cry3Aa">
    <location>
        <begin position="58"/>
        <end position="644"/>
    </location>
</feature>
<feature type="region of interest" description="Disordered" evidence="1">
    <location>
        <begin position="1"/>
        <end position="20"/>
    </location>
</feature>
<feature type="compositionally biased region" description="Basic and acidic residues" evidence="1">
    <location>
        <begin position="1"/>
        <end position="13"/>
    </location>
</feature>
<feature type="sequence conflict" description="In Ref. 3; AAA22542." evidence="2" ref="3">
    <original>G</original>
    <variation>A</variation>
    <location>
        <position position="544"/>
    </location>
</feature>
<feature type="helix" evidence="3">
    <location>
        <begin position="63"/>
        <end position="76"/>
    </location>
</feature>
<feature type="helix" evidence="3">
    <location>
        <begin position="85"/>
        <end position="98"/>
    </location>
</feature>
<feature type="strand" evidence="3">
    <location>
        <begin position="100"/>
        <end position="102"/>
    </location>
</feature>
<feature type="helix" evidence="3">
    <location>
        <begin position="103"/>
        <end position="117"/>
    </location>
</feature>
<feature type="helix" evidence="3">
    <location>
        <begin position="123"/>
        <end position="152"/>
    </location>
</feature>
<feature type="helix" evidence="3">
    <location>
        <begin position="160"/>
        <end position="180"/>
    </location>
</feature>
<feature type="helix" evidence="3">
    <location>
        <begin position="181"/>
        <end position="184"/>
    </location>
</feature>
<feature type="turn" evidence="3">
    <location>
        <begin position="190"/>
        <end position="193"/>
    </location>
</feature>
<feature type="helix" evidence="3">
    <location>
        <begin position="194"/>
        <end position="214"/>
    </location>
</feature>
<feature type="turn" evidence="3">
    <location>
        <begin position="215"/>
        <end position="219"/>
    </location>
</feature>
<feature type="helix" evidence="3">
    <location>
        <begin position="222"/>
        <end position="253"/>
    </location>
</feature>
<feature type="helix" evidence="3">
    <location>
        <begin position="259"/>
        <end position="275"/>
    </location>
</feature>
<feature type="helix" evidence="3">
    <location>
        <begin position="277"/>
        <end position="280"/>
    </location>
</feature>
<feature type="helix" evidence="3">
    <location>
        <begin position="283"/>
        <end position="286"/>
    </location>
</feature>
<feature type="turn" evidence="3">
    <location>
        <begin position="288"/>
        <end position="290"/>
    </location>
</feature>
<feature type="strand" evidence="3">
    <location>
        <begin position="293"/>
        <end position="296"/>
    </location>
</feature>
<feature type="strand" evidence="3">
    <location>
        <begin position="302"/>
        <end position="304"/>
    </location>
</feature>
<feature type="helix" evidence="3">
    <location>
        <begin position="321"/>
        <end position="325"/>
    </location>
</feature>
<feature type="strand" evidence="3">
    <location>
        <begin position="335"/>
        <end position="347"/>
    </location>
</feature>
<feature type="strand" evidence="3">
    <location>
        <begin position="356"/>
        <end position="369"/>
    </location>
</feature>
<feature type="strand" evidence="3">
    <location>
        <begin position="390"/>
        <end position="393"/>
    </location>
</feature>
<feature type="strand" evidence="3">
    <location>
        <begin position="398"/>
        <end position="411"/>
    </location>
</feature>
<feature type="strand" evidence="3">
    <location>
        <begin position="414"/>
        <end position="428"/>
    </location>
</feature>
<feature type="turn" evidence="3">
    <location>
        <begin position="429"/>
        <end position="432"/>
    </location>
</feature>
<feature type="strand" evidence="3">
    <location>
        <begin position="433"/>
        <end position="440"/>
    </location>
</feature>
<feature type="strand" evidence="3">
    <location>
        <begin position="447"/>
        <end position="451"/>
    </location>
</feature>
<feature type="helix" evidence="3">
    <location>
        <begin position="452"/>
        <end position="454"/>
    </location>
</feature>
<feature type="strand" evidence="3">
    <location>
        <begin position="461"/>
        <end position="463"/>
    </location>
</feature>
<feature type="helix" evidence="3">
    <location>
        <begin position="465"/>
        <end position="468"/>
    </location>
</feature>
<feature type="strand" evidence="3">
    <location>
        <begin position="471"/>
        <end position="480"/>
    </location>
</feature>
<feature type="helix" evidence="3">
    <location>
        <begin position="482"/>
        <end position="484"/>
    </location>
</feature>
<feature type="strand" evidence="3">
    <location>
        <begin position="487"/>
        <end position="495"/>
    </location>
</feature>
<feature type="strand" evidence="3">
    <location>
        <begin position="506"/>
        <end position="513"/>
    </location>
</feature>
<feature type="helix" evidence="3">
    <location>
        <begin position="514"/>
        <end position="516"/>
    </location>
</feature>
<feature type="strand" evidence="3">
    <location>
        <begin position="518"/>
        <end position="520"/>
    </location>
</feature>
<feature type="strand" evidence="3">
    <location>
        <begin position="525"/>
        <end position="527"/>
    </location>
</feature>
<feature type="strand" evidence="3">
    <location>
        <begin position="531"/>
        <end position="535"/>
    </location>
</feature>
<feature type="strand" evidence="3">
    <location>
        <begin position="537"/>
        <end position="540"/>
    </location>
</feature>
<feature type="strand" evidence="3">
    <location>
        <begin position="542"/>
        <end position="550"/>
    </location>
</feature>
<feature type="strand" evidence="3">
    <location>
        <begin position="552"/>
        <end position="554"/>
    </location>
</feature>
<feature type="strand" evidence="3">
    <location>
        <begin position="560"/>
        <end position="571"/>
    </location>
</feature>
<feature type="strand" evidence="3">
    <location>
        <begin position="573"/>
        <end position="579"/>
    </location>
</feature>
<feature type="strand" evidence="3">
    <location>
        <begin position="582"/>
        <end position="589"/>
    </location>
</feature>
<feature type="helix" evidence="3">
    <location>
        <begin position="601"/>
        <end position="603"/>
    </location>
</feature>
<feature type="strand" evidence="3">
    <location>
        <begin position="605"/>
        <end position="608"/>
    </location>
</feature>
<feature type="strand" evidence="3">
    <location>
        <begin position="618"/>
        <end position="625"/>
    </location>
</feature>
<feature type="strand" evidence="3">
    <location>
        <begin position="633"/>
        <end position="643"/>
    </location>
</feature>
<keyword id="KW-0002">3D-structure</keyword>
<keyword id="KW-0308">Genetically modified food</keyword>
<keyword id="KW-0749">Sporulation</keyword>
<keyword id="KW-0800">Toxin</keyword>
<keyword id="KW-0843">Virulence</keyword>
<protein>
    <recommendedName>
        <fullName>Pesticidal crystal protein Cry3Aa</fullName>
    </recommendedName>
    <alternativeName>
        <fullName>73 kDa crystal protein</fullName>
    </alternativeName>
    <alternativeName>
        <fullName>Crystaline entomocidal protoxin</fullName>
    </alternativeName>
    <alternativeName>
        <fullName>Insecticidal delta-endotoxin CryIIIA(a)</fullName>
    </alternativeName>
</protein>
<comment type="function">
    <text>Promotes colloidosmotic lysis by binding to the midgut epithelial cells of Coleoptera.</text>
</comment>
<comment type="developmental stage">
    <text>The crystal protein is produced during sporulation and is accumulated both as an inclusion and as part of the spore coat.</text>
</comment>
<comment type="biotechnology">
    <text>Introduced by genetic manipulation and expressed in insect-resistant potato by Monsanto.</text>
</comment>
<comment type="miscellaneous">
    <text>Toxic segment of the protein is located in the N-terminus.</text>
</comment>
<comment type="similarity">
    <text evidence="2">Belongs to the delta endotoxin family.</text>
</comment>
<gene>
    <name type="primary">cry3Aa</name>
    <name type="synonym">bt13</name>
    <name type="synonym">cry3A</name>
    <name type="synonym">cryC</name>
    <name type="synonym">cryIIIa</name>
    <name type="synonym">cryIIIA(a)</name>
</gene>
<reference key="1">
    <citation type="journal article" date="1987" name="Nucleic Acids Res.">
        <title>Nucleotide sequence of a gene encoding an insecticidal protein of Bacillus thuringiensis var. tenebrionis toxic against Coleoptera.</title>
        <authorList>
            <person name="Hoefte H."/>
            <person name="Seurinck J."/>
            <person name="Houtven A.V."/>
            <person name="Vaeck M."/>
        </authorList>
    </citation>
    <scope>NUCLEOTIDE SEQUENCE [GENOMIC DNA]</scope>
</reference>
<reference key="2">
    <citation type="journal article" date="1987" name="Proc. Natl. Acad. Sci. U.S.A.">
        <title>Molecular cloning and characterization of the insecticidal crystal protein gene of Bacillus thuringiensis var. tenebrionis.</title>
        <authorList>
            <person name="Sekar V."/>
            <person name="Thompson D.V."/>
            <person name="Maroney M.J."/>
            <person name="Bookland R.G."/>
            <person name="Adang M.J."/>
        </authorList>
    </citation>
    <scope>NUCLEOTIDE SEQUENCE [GENOMIC DNA]</scope>
</reference>
<reference key="3">
    <citation type="journal article" date="1988" name="Biotechnology (N.Y.)">
        <title>Characterization of the coleopteran-specific protein gene of Bacillus thuringiensis var. tenebrionis.</title>
        <authorList>
            <person name="McPherson S.A."/>
            <person name="Perlak F.J."/>
            <person name="Fuchs R.L."/>
            <person name="Marrone P.G."/>
            <person name="Lavrik P.B."/>
            <person name="Fischhoff D.A."/>
        </authorList>
    </citation>
    <scope>NUCLEOTIDE SEQUENCE [GENOMIC DNA]</scope>
</reference>
<reference key="4">
    <citation type="journal article" date="1994" name="Mol. Microbiol.">
        <title>Elucidation of the mechanism of CryIIIA overproduction in a mutagenized strain of Bacillus thuringiensis var. tenebrionis.</title>
        <authorList>
            <person name="Adams L.F."/>
            <person name="Mathewes S."/>
            <person name="O'Hara P."/>
            <person name="Petersen A."/>
            <person name="Gurtler H."/>
        </authorList>
    </citation>
    <scope>NUCLEOTIDE SEQUENCE [GENOMIC DNA]</scope>
    <source>
        <strain>NB176</strain>
    </source>
</reference>
<reference key="5">
    <citation type="journal article" date="1991" name="Nature">
        <title>Crystal structure of insecticidal delta-endotoxin from Bacillus thuringiensis at 2.5-A resolution.</title>
        <authorList>
            <person name="Li J."/>
            <person name="Carroll J."/>
            <person name="Ellar D.J."/>
        </authorList>
    </citation>
    <scope>X-RAY CRYSTALLOGRAPHY (2.5 ANGSTROMS)</scope>
</reference>
<evidence type="ECO:0000256" key="1">
    <source>
        <dbReference type="SAM" id="MobiDB-lite"/>
    </source>
</evidence>
<evidence type="ECO:0000305" key="2"/>
<evidence type="ECO:0007829" key="3">
    <source>
        <dbReference type="PDB" id="1DLC"/>
    </source>
</evidence>
<sequence>MNPNNRSEHDTIKTTENNEVPTNHVQYPLAETPNPTLEDLNYKEFLRMTADNNTEALDSSTTKDVIQKGISVVGDLLGVVGFPFGGALVSFYTNFLNTIWPSEDPWKAFMEQVEALMDQKIADYAKNKALAELQGLQNNVEDYVSALSSWQKNPVSSRNPHSQGRIRELFSQAESHFRNSMPSFAISGYEVLFLTTYAQAANTHLFLLKDAQIYGEEWGYEKEDIAEFYKRQLKLTQEYTDHCVKWYNVGLDKLRGSSYESWVNFNRYRREMTLTVLDLIALFPLYDVRLYPKEVKTELTRDVLTDPIVGVNNLRGYGTTFSNIENYIRKPHLFDYLHRIQFHTRFQPGYYGNDSFNYWSGNYVSTRPSIGSNDIITSPFYGNKSSEPVQNLEFNGEKVYRAVANTNLAVWPSAVYSGVTKVEFSQYNDQTDEASTQTYDSKRNVGAVSWDSIDQLPPETTDEPLEKGYSHQLNYVMCFLMQGSRGTIPVLTWTHKSVDFFNMIDSKKITQLPLVKAYKLQSGASVVAGPRFTGGDIIQCTENGSAATIYVTPDVSYSQKYRARIHYASTSQITFTLSLDGAPFNQYYFDKTINKGDTLTYNSFNLASFSTPFELSGNNLQIGVTGLSAGDKVYIDKIEFIPVN</sequence>
<proteinExistence type="evidence at protein level"/>
<dbReference type="EMBL" id="Y00420">
    <property type="protein sequence ID" value="CAA68482.1"/>
    <property type="molecule type" value="Genomic_DNA"/>
</dbReference>
<dbReference type="EMBL" id="J02978">
    <property type="protein sequence ID" value="AAA22541.1"/>
    <property type="molecule type" value="Genomic_DNA"/>
</dbReference>
<dbReference type="EMBL" id="M30503">
    <property type="protein sequence ID" value="AAA22542.1"/>
    <property type="molecule type" value="Genomic_DNA"/>
</dbReference>
<dbReference type="EMBL" id="U10985">
    <property type="protein sequence ID" value="AAC43266.1"/>
    <property type="molecule type" value="Genomic_DNA"/>
</dbReference>
<dbReference type="RefSeq" id="WP_052574943.1">
    <property type="nucleotide sequence ID" value="NZ_CP133377.1"/>
</dbReference>
<dbReference type="PDB" id="1DLC">
    <property type="method" value="X-ray"/>
    <property type="resolution" value="2.50 A"/>
    <property type="chains" value="A=61-644"/>
</dbReference>
<dbReference type="PDB" id="4QX0">
    <property type="method" value="X-ray"/>
    <property type="resolution" value="2.80 A"/>
    <property type="chains" value="A=58-644"/>
</dbReference>
<dbReference type="PDB" id="4QX1">
    <property type="method" value="X-ray"/>
    <property type="resolution" value="2.80 A"/>
    <property type="chains" value="A=58-644"/>
</dbReference>
<dbReference type="PDB" id="4QX2">
    <property type="method" value="X-ray"/>
    <property type="resolution" value="2.90 A"/>
    <property type="chains" value="A=58-644"/>
</dbReference>
<dbReference type="PDB" id="4QX3">
    <property type="method" value="X-ray"/>
    <property type="resolution" value="2.90 A"/>
    <property type="chains" value="A=58-644"/>
</dbReference>
<dbReference type="PDBsum" id="1DLC"/>
<dbReference type="PDBsum" id="4QX0"/>
<dbReference type="PDBsum" id="4QX1"/>
<dbReference type="PDBsum" id="4QX2"/>
<dbReference type="PDBsum" id="4QX3"/>
<dbReference type="SMR" id="P0A379"/>
<dbReference type="EvolutionaryTrace" id="P0A379"/>
<dbReference type="GO" id="GO:0005102">
    <property type="term" value="F:signaling receptor binding"/>
    <property type="evidence" value="ECO:0007669"/>
    <property type="project" value="InterPro"/>
</dbReference>
<dbReference type="GO" id="GO:0090729">
    <property type="term" value="F:toxin activity"/>
    <property type="evidence" value="ECO:0007669"/>
    <property type="project" value="UniProtKB-KW"/>
</dbReference>
<dbReference type="GO" id="GO:0030435">
    <property type="term" value="P:sporulation resulting in formation of a cellular spore"/>
    <property type="evidence" value="ECO:0007669"/>
    <property type="project" value="UniProtKB-KW"/>
</dbReference>
<dbReference type="GO" id="GO:0001907">
    <property type="term" value="P:symbiont-mediated killing of host cell"/>
    <property type="evidence" value="ECO:0007669"/>
    <property type="project" value="InterPro"/>
</dbReference>
<dbReference type="CDD" id="cd04085">
    <property type="entry name" value="delta_endotoxin_C"/>
    <property type="match status" value="1"/>
</dbReference>
<dbReference type="Gene3D" id="2.60.120.260">
    <property type="entry name" value="Galactose-binding domain-like"/>
    <property type="match status" value="1"/>
</dbReference>
<dbReference type="Gene3D" id="2.100.10.10">
    <property type="entry name" value="Pesticidal crystal protein, central domain"/>
    <property type="match status" value="1"/>
</dbReference>
<dbReference type="Gene3D" id="1.20.190.10">
    <property type="entry name" value="Pesticidal crystal protein, N-terminal domain"/>
    <property type="match status" value="1"/>
</dbReference>
<dbReference type="InterPro" id="IPR008979">
    <property type="entry name" value="Galactose-bd-like_sf"/>
</dbReference>
<dbReference type="InterPro" id="IPR038979">
    <property type="entry name" value="Pest_crys"/>
</dbReference>
<dbReference type="InterPro" id="IPR005638">
    <property type="entry name" value="Pest_crys_dom-III"/>
</dbReference>
<dbReference type="InterPro" id="IPR005639">
    <property type="entry name" value="Pest_crys_dom_I"/>
</dbReference>
<dbReference type="InterPro" id="IPR036716">
    <property type="entry name" value="Pest_crys_N_sf"/>
</dbReference>
<dbReference type="InterPro" id="IPR036399">
    <property type="entry name" value="Pest_cryst_cen_dom_sf"/>
</dbReference>
<dbReference type="InterPro" id="IPR001178">
    <property type="entry name" value="Pest_cryst_dom_II"/>
</dbReference>
<dbReference type="PANTHER" id="PTHR37003">
    <property type="entry name" value="ENDOTOXIN_N DOMAIN-CONTAINING PROTEIN-RELATED"/>
    <property type="match status" value="1"/>
</dbReference>
<dbReference type="PANTHER" id="PTHR37003:SF2">
    <property type="entry name" value="PESTICIDAL CRYSTAL PROTEIN N-TERMINAL DOMAIN-CONTAINING PROTEIN"/>
    <property type="match status" value="1"/>
</dbReference>
<dbReference type="Pfam" id="PF03944">
    <property type="entry name" value="Endotoxin_C"/>
    <property type="match status" value="1"/>
</dbReference>
<dbReference type="Pfam" id="PF00555">
    <property type="entry name" value="Endotoxin_M"/>
    <property type="match status" value="1"/>
</dbReference>
<dbReference type="Pfam" id="PF03945">
    <property type="entry name" value="Endotoxin_N"/>
    <property type="match status" value="1"/>
</dbReference>
<dbReference type="SUPFAM" id="SSF51096">
    <property type="entry name" value="delta-Endotoxin (insectocide), middle domain"/>
    <property type="match status" value="1"/>
</dbReference>
<dbReference type="SUPFAM" id="SSF56849">
    <property type="entry name" value="delta-Endotoxin (insectocide), N-terminal domain"/>
    <property type="match status" value="1"/>
</dbReference>
<dbReference type="SUPFAM" id="SSF49785">
    <property type="entry name" value="Galactose-binding domain-like"/>
    <property type="match status" value="1"/>
</dbReference>
<accession>P0A379</accession>
<accession>P07130</accession>
<accession>P21255</accession>
<organism>
    <name type="scientific">Bacillus thuringiensis subsp. tenebrionis</name>
    <dbReference type="NCBI Taxonomy" id="1444"/>
    <lineage>
        <taxon>Bacteria</taxon>
        <taxon>Bacillati</taxon>
        <taxon>Bacillota</taxon>
        <taxon>Bacilli</taxon>
        <taxon>Bacillales</taxon>
        <taxon>Bacillaceae</taxon>
        <taxon>Bacillus</taxon>
        <taxon>Bacillus cereus group</taxon>
    </lineage>
</organism>
<name>CR3AA_BACTT</name>